<proteinExistence type="inferred from homology"/>
<organism>
    <name type="scientific">Rickettsia conorii (strain ATCC VR-613 / Malish 7)</name>
    <dbReference type="NCBI Taxonomy" id="272944"/>
    <lineage>
        <taxon>Bacteria</taxon>
        <taxon>Pseudomonadati</taxon>
        <taxon>Pseudomonadota</taxon>
        <taxon>Alphaproteobacteria</taxon>
        <taxon>Rickettsiales</taxon>
        <taxon>Rickettsiaceae</taxon>
        <taxon>Rickettsieae</taxon>
        <taxon>Rickettsia</taxon>
        <taxon>spotted fever group</taxon>
    </lineage>
</organism>
<dbReference type="EMBL" id="AE006914">
    <property type="protein sequence ID" value="AAL03820.1"/>
    <property type="molecule type" value="Genomic_DNA"/>
</dbReference>
<dbReference type="PIR" id="B97860">
    <property type="entry name" value="B97860"/>
</dbReference>
<dbReference type="KEGG" id="rco:RC1282"/>
<dbReference type="HOGENOM" id="CLU_1146500_0_0_5"/>
<dbReference type="Proteomes" id="UP000000816">
    <property type="component" value="Chromosome"/>
</dbReference>
<dbReference type="Gene3D" id="2.40.160.20">
    <property type="match status" value="1"/>
</dbReference>
<dbReference type="InterPro" id="IPR011250">
    <property type="entry name" value="OMP/PagP_b-brl"/>
</dbReference>
<dbReference type="InterPro" id="IPR027385">
    <property type="entry name" value="OMP_b-brl"/>
</dbReference>
<dbReference type="Pfam" id="PF13505">
    <property type="entry name" value="OMP_b-brl"/>
    <property type="match status" value="1"/>
</dbReference>
<dbReference type="SUPFAM" id="SSF56925">
    <property type="entry name" value="OMPA-like"/>
    <property type="match status" value="1"/>
</dbReference>
<gene>
    <name type="ordered locus">RC1282</name>
</gene>
<name>Y1282_RICCN</name>
<feature type="signal peptide" evidence="1">
    <location>
        <begin position="1"/>
        <end position="25"/>
    </location>
</feature>
<feature type="chain" id="PRO_0000317023" description="Uncharacterized protein RC1282">
    <location>
        <begin position="26"/>
        <end position="227"/>
    </location>
</feature>
<keyword id="KW-0732">Signal</keyword>
<protein>
    <recommendedName>
        <fullName>Uncharacterized protein RC1282</fullName>
    </recommendedName>
</protein>
<accession>Q92G42</accession>
<reference key="1">
    <citation type="journal article" date="2001" name="Science">
        <title>Mechanisms of evolution in Rickettsia conorii and R. prowazekii.</title>
        <authorList>
            <person name="Ogata H."/>
            <person name="Audic S."/>
            <person name="Renesto-Audiffren P."/>
            <person name="Fournier P.-E."/>
            <person name="Barbe V."/>
            <person name="Samson D."/>
            <person name="Roux V."/>
            <person name="Cossart P."/>
            <person name="Weissenbach J."/>
            <person name="Claverie J.-M."/>
            <person name="Raoult D."/>
        </authorList>
    </citation>
    <scope>NUCLEOTIDE SEQUENCE [LARGE SCALE GENOMIC DNA]</scope>
    <source>
        <strain>ATCC VR-613 / Malish 7</strain>
    </source>
</reference>
<sequence length="227" mass="24449">MLIMKKLLLIAATSATMLSSSVSFAEGMDHEWYLRIDTGAAMFNEEKDKATGVKLKSNTTVPVALGIGYYISENFRADLTLGTIIGGKLKKSGAATNAPFTRTNISASHKPTITRLLINGYVDLTNFDMFDVFAGAGVGSALVKEKITYNGITGLSSNTKNRTNISYKLTLGTSAQIADGVKVELAYSWIDDGRTKSKNVIYQGTSVPTGGMHYQSHNLTAGIRFDI</sequence>
<comment type="similarity">
    <text evidence="2">To R.conorii RC1281.</text>
</comment>
<evidence type="ECO:0000255" key="1"/>
<evidence type="ECO:0000305" key="2"/>